<name>RS2_RHOOB</name>
<dbReference type="EMBL" id="AP011115">
    <property type="protein sequence ID" value="BAH54859.1"/>
    <property type="molecule type" value="Genomic_DNA"/>
</dbReference>
<dbReference type="RefSeq" id="WP_015890299.1">
    <property type="nucleotide sequence ID" value="NC_012522.1"/>
</dbReference>
<dbReference type="SMR" id="C1B2U2"/>
<dbReference type="STRING" id="632772.ROP_66120"/>
<dbReference type="KEGG" id="rop:ROP_66120"/>
<dbReference type="PATRIC" id="fig|632772.20.peg.6898"/>
<dbReference type="HOGENOM" id="CLU_040318_2_3_11"/>
<dbReference type="OrthoDB" id="9808036at2"/>
<dbReference type="Proteomes" id="UP000002212">
    <property type="component" value="Chromosome"/>
</dbReference>
<dbReference type="GO" id="GO:0022627">
    <property type="term" value="C:cytosolic small ribosomal subunit"/>
    <property type="evidence" value="ECO:0007669"/>
    <property type="project" value="TreeGrafter"/>
</dbReference>
<dbReference type="GO" id="GO:0003735">
    <property type="term" value="F:structural constituent of ribosome"/>
    <property type="evidence" value="ECO:0007669"/>
    <property type="project" value="InterPro"/>
</dbReference>
<dbReference type="GO" id="GO:0006412">
    <property type="term" value="P:translation"/>
    <property type="evidence" value="ECO:0007669"/>
    <property type="project" value="UniProtKB-UniRule"/>
</dbReference>
<dbReference type="CDD" id="cd01425">
    <property type="entry name" value="RPS2"/>
    <property type="match status" value="1"/>
</dbReference>
<dbReference type="FunFam" id="1.10.287.610:FF:000001">
    <property type="entry name" value="30S ribosomal protein S2"/>
    <property type="match status" value="1"/>
</dbReference>
<dbReference type="Gene3D" id="3.40.50.10490">
    <property type="entry name" value="Glucose-6-phosphate isomerase like protein, domain 1"/>
    <property type="match status" value="1"/>
</dbReference>
<dbReference type="Gene3D" id="1.10.287.610">
    <property type="entry name" value="Helix hairpin bin"/>
    <property type="match status" value="1"/>
</dbReference>
<dbReference type="HAMAP" id="MF_00291_B">
    <property type="entry name" value="Ribosomal_uS2_B"/>
    <property type="match status" value="1"/>
</dbReference>
<dbReference type="InterPro" id="IPR001865">
    <property type="entry name" value="Ribosomal_uS2"/>
</dbReference>
<dbReference type="InterPro" id="IPR005706">
    <property type="entry name" value="Ribosomal_uS2_bac/mit/plastid"/>
</dbReference>
<dbReference type="InterPro" id="IPR018130">
    <property type="entry name" value="Ribosomal_uS2_CS"/>
</dbReference>
<dbReference type="InterPro" id="IPR023591">
    <property type="entry name" value="Ribosomal_uS2_flav_dom_sf"/>
</dbReference>
<dbReference type="NCBIfam" id="TIGR01011">
    <property type="entry name" value="rpsB_bact"/>
    <property type="match status" value="1"/>
</dbReference>
<dbReference type="PANTHER" id="PTHR12534">
    <property type="entry name" value="30S RIBOSOMAL PROTEIN S2 PROKARYOTIC AND ORGANELLAR"/>
    <property type="match status" value="1"/>
</dbReference>
<dbReference type="PANTHER" id="PTHR12534:SF0">
    <property type="entry name" value="SMALL RIBOSOMAL SUBUNIT PROTEIN US2M"/>
    <property type="match status" value="1"/>
</dbReference>
<dbReference type="Pfam" id="PF00318">
    <property type="entry name" value="Ribosomal_S2"/>
    <property type="match status" value="1"/>
</dbReference>
<dbReference type="PRINTS" id="PR00395">
    <property type="entry name" value="RIBOSOMALS2"/>
</dbReference>
<dbReference type="SUPFAM" id="SSF52313">
    <property type="entry name" value="Ribosomal protein S2"/>
    <property type="match status" value="1"/>
</dbReference>
<dbReference type="PROSITE" id="PS00962">
    <property type="entry name" value="RIBOSOMAL_S2_1"/>
    <property type="match status" value="1"/>
</dbReference>
<comment type="similarity">
    <text evidence="1">Belongs to the universal ribosomal protein uS2 family.</text>
</comment>
<protein>
    <recommendedName>
        <fullName evidence="1">Small ribosomal subunit protein uS2</fullName>
    </recommendedName>
    <alternativeName>
        <fullName evidence="3">30S ribosomal protein S2</fullName>
    </alternativeName>
</protein>
<keyword id="KW-0687">Ribonucleoprotein</keyword>
<keyword id="KW-0689">Ribosomal protein</keyword>
<evidence type="ECO:0000255" key="1">
    <source>
        <dbReference type="HAMAP-Rule" id="MF_00291"/>
    </source>
</evidence>
<evidence type="ECO:0000256" key="2">
    <source>
        <dbReference type="SAM" id="MobiDB-lite"/>
    </source>
</evidence>
<evidence type="ECO:0000305" key="3"/>
<sequence>MAVVTMKQLLDSGTHFGHQTRRWNPKMKRFIFTDRNGIYIIDLQQTLTYIDKAYEFVKETVAHGGTVLFVGTKKQAQESIAAEATRVGMPYVNQRWLGGMLTNFTTVHKRLLRLKELEAMEQTGGFEGRTKKEILMLTREMTKLDRTLGGIRDMAKVPSAVWVVDTNKEHLAVAEARKLNIPVIAILDTNCDPDLVDYPIPGNDDAIRSAALLTKVVASAVAEGVQARAGLSSDKDAKPEAGAGEPLAEWEQELLSQAAPAAEAAPAAEAQAAPAAEAPAAEAPSTEA</sequence>
<organism>
    <name type="scientific">Rhodococcus opacus (strain B4)</name>
    <dbReference type="NCBI Taxonomy" id="632772"/>
    <lineage>
        <taxon>Bacteria</taxon>
        <taxon>Bacillati</taxon>
        <taxon>Actinomycetota</taxon>
        <taxon>Actinomycetes</taxon>
        <taxon>Mycobacteriales</taxon>
        <taxon>Nocardiaceae</taxon>
        <taxon>Rhodococcus</taxon>
    </lineage>
</organism>
<gene>
    <name evidence="1" type="primary">rpsB</name>
    <name type="ordered locus">ROP_66120</name>
</gene>
<proteinExistence type="inferred from homology"/>
<accession>C1B2U2</accession>
<feature type="chain" id="PRO_1000194343" description="Small ribosomal subunit protein uS2">
    <location>
        <begin position="1"/>
        <end position="288"/>
    </location>
</feature>
<feature type="region of interest" description="Disordered" evidence="2">
    <location>
        <begin position="228"/>
        <end position="288"/>
    </location>
</feature>
<feature type="compositionally biased region" description="Low complexity" evidence="2">
    <location>
        <begin position="257"/>
        <end position="288"/>
    </location>
</feature>
<reference key="1">
    <citation type="submission" date="2009-03" db="EMBL/GenBank/DDBJ databases">
        <title>Comparison of the complete genome sequences of Rhodococcus erythropolis PR4 and Rhodococcus opacus B4.</title>
        <authorList>
            <person name="Takarada H."/>
            <person name="Sekine M."/>
            <person name="Hosoyama A."/>
            <person name="Yamada R."/>
            <person name="Fujisawa T."/>
            <person name="Omata S."/>
            <person name="Shimizu A."/>
            <person name="Tsukatani N."/>
            <person name="Tanikawa S."/>
            <person name="Fujita N."/>
            <person name="Harayama S."/>
        </authorList>
    </citation>
    <scope>NUCLEOTIDE SEQUENCE [LARGE SCALE GENOMIC DNA]</scope>
    <source>
        <strain>B4</strain>
    </source>
</reference>